<organism>
    <name type="scientific">Caenorhabditis elegans</name>
    <dbReference type="NCBI Taxonomy" id="6239"/>
    <lineage>
        <taxon>Eukaryota</taxon>
        <taxon>Metazoa</taxon>
        <taxon>Ecdysozoa</taxon>
        <taxon>Nematoda</taxon>
        <taxon>Chromadorea</taxon>
        <taxon>Rhabditida</taxon>
        <taxon>Rhabditina</taxon>
        <taxon>Rhabditomorpha</taxon>
        <taxon>Rhabditoidea</taxon>
        <taxon>Rhabditidae</taxon>
        <taxon>Peloderinae</taxon>
        <taxon>Caenorhabditis</taxon>
    </lineage>
</organism>
<accession>P46554</accession>
<keyword id="KW-0489">Methyltransferase</keyword>
<keyword id="KW-1185">Reference proteome</keyword>
<keyword id="KW-0949">S-adenosyl-L-methionine</keyword>
<keyword id="KW-0808">Transferase</keyword>
<proteinExistence type="inferred from homology"/>
<name>LCMT1_CAEEL</name>
<protein>
    <recommendedName>
        <fullName evidence="1">Leucine carboxyl methyltransferase 1</fullName>
        <ecNumber evidence="1">2.1.1.233</ecNumber>
    </recommendedName>
    <alternativeName>
        <fullName evidence="1">[Phosphatase 2A protein]-leucine-carboxy methyltransferase 1</fullName>
    </alternativeName>
</protein>
<comment type="function">
    <text evidence="1">Methylates the carboxyl group of the C-terminal leucine residue of protein phosphatase 2A catalytic subunits to form alpha-leucine ester residues.</text>
</comment>
<comment type="catalytic activity">
    <reaction evidence="1">
        <text>[phosphatase 2A protein]-C-terminal L-leucine + S-adenosyl-L-methionine = [phosphatase 2A protein]-C-terminal L-leucine methyl ester + S-adenosyl-L-homocysteine</text>
        <dbReference type="Rhea" id="RHEA:48544"/>
        <dbReference type="Rhea" id="RHEA-COMP:12134"/>
        <dbReference type="Rhea" id="RHEA-COMP:12135"/>
        <dbReference type="ChEBI" id="CHEBI:57856"/>
        <dbReference type="ChEBI" id="CHEBI:59789"/>
        <dbReference type="ChEBI" id="CHEBI:90516"/>
        <dbReference type="ChEBI" id="CHEBI:90517"/>
        <dbReference type="EC" id="2.1.1.233"/>
    </reaction>
</comment>
<comment type="similarity">
    <text evidence="2">Belongs to the methyltransferase superfamily. LCMT family.</text>
</comment>
<sequence>MDSEAVSSDSHVAAAIATRRRSNSVSDDYSVQRTNDDATQCKYFATQKGYWKDEFISRFANSSSNVSEARRFPEISMGYWARTAAIEKYVRDFLNEFDGNAQVVSLGCGFDTLFWRLVSSGAKLVKYVEVDFSSVTSKKIRHILKPIGPNSVDLKKSFESDAVVSHHADLHAGNYHLIGADLRQANELDQKLATCQLSHDIPTIFIAECVLVYMSADSSTALLKQIVSQFKQPAFVNYEQFRTSDAFTKVMEQNLGDRGIQLHGLEMCESAEKQEERFRNAGFKEVKVMDMNQIFNNFLDQKEVSRIREIEMLDEMELLQQLFAHYCVVSARI</sequence>
<dbReference type="EC" id="2.1.1.233" evidence="1"/>
<dbReference type="EMBL" id="BX284603">
    <property type="protein sequence ID" value="CAA84295.1"/>
    <property type="molecule type" value="Genomic_DNA"/>
</dbReference>
<dbReference type="PIR" id="T18690">
    <property type="entry name" value="T18690"/>
</dbReference>
<dbReference type="RefSeq" id="NP_497875.1">
    <property type="nucleotide sequence ID" value="NM_065474.5"/>
</dbReference>
<dbReference type="SMR" id="P46554"/>
<dbReference type="BioGRID" id="40797">
    <property type="interactions" value="6"/>
</dbReference>
<dbReference type="FunCoup" id="P46554">
    <property type="interactions" value="3018"/>
</dbReference>
<dbReference type="STRING" id="6239.B0285.4.2"/>
<dbReference type="iPTMnet" id="P46554"/>
<dbReference type="PaxDb" id="6239-B0285.4"/>
<dbReference type="PeptideAtlas" id="P46554"/>
<dbReference type="EnsemblMetazoa" id="B0285.4.1">
    <property type="protein sequence ID" value="B0285.4.1"/>
    <property type="gene ID" value="WBGene00007137"/>
</dbReference>
<dbReference type="GeneID" id="175561"/>
<dbReference type="KEGG" id="cel:CELE_B0285.4"/>
<dbReference type="UCSC" id="B0285.4">
    <property type="organism name" value="c. elegans"/>
</dbReference>
<dbReference type="AGR" id="WB:WBGene00007137"/>
<dbReference type="CTD" id="175561"/>
<dbReference type="WormBase" id="B0285.4">
    <property type="protein sequence ID" value="CE00643"/>
    <property type="gene ID" value="WBGene00007137"/>
    <property type="gene designation" value="lcmt-1"/>
</dbReference>
<dbReference type="eggNOG" id="KOG2918">
    <property type="taxonomic scope" value="Eukaryota"/>
</dbReference>
<dbReference type="GeneTree" id="ENSGT00940000156372"/>
<dbReference type="HOGENOM" id="CLU_031312_0_0_1"/>
<dbReference type="InParanoid" id="P46554"/>
<dbReference type="OMA" id="IIYEPIR"/>
<dbReference type="OrthoDB" id="203237at2759"/>
<dbReference type="PhylomeDB" id="P46554"/>
<dbReference type="Reactome" id="R-CEL-69273">
    <property type="pathway name" value="Cyclin A/B1/B2 associated events during G2/M transition"/>
</dbReference>
<dbReference type="PRO" id="PR:P46554"/>
<dbReference type="Proteomes" id="UP000001940">
    <property type="component" value="Chromosome III"/>
</dbReference>
<dbReference type="Bgee" id="WBGene00007137">
    <property type="expression patterns" value="Expressed in germ line (C elegans) and 4 other cell types or tissues"/>
</dbReference>
<dbReference type="GO" id="GO:0005829">
    <property type="term" value="C:cytosol"/>
    <property type="evidence" value="ECO:0000318"/>
    <property type="project" value="GO_Central"/>
</dbReference>
<dbReference type="GO" id="GO:0018423">
    <property type="term" value="F:protein C-terminal leucine carboxyl O-methyltransferase activity"/>
    <property type="evidence" value="ECO:0000318"/>
    <property type="project" value="GO_Central"/>
</dbReference>
<dbReference type="GO" id="GO:0032259">
    <property type="term" value="P:methylation"/>
    <property type="evidence" value="ECO:0007669"/>
    <property type="project" value="UniProtKB-KW"/>
</dbReference>
<dbReference type="GO" id="GO:0090266">
    <property type="term" value="P:regulation of mitotic cell cycle spindle assembly checkpoint"/>
    <property type="evidence" value="ECO:0000318"/>
    <property type="project" value="GO_Central"/>
</dbReference>
<dbReference type="FunFam" id="3.40.50.150:FF:000092">
    <property type="entry name" value="Leucine carboxyl methyltransferase 1"/>
    <property type="match status" value="1"/>
</dbReference>
<dbReference type="Gene3D" id="3.40.50.150">
    <property type="entry name" value="Vaccinia Virus protein VP39"/>
    <property type="match status" value="1"/>
</dbReference>
<dbReference type="InterPro" id="IPR016651">
    <property type="entry name" value="LCMT1"/>
</dbReference>
<dbReference type="InterPro" id="IPR007213">
    <property type="entry name" value="Ppm1/Ppm2/Tcmp"/>
</dbReference>
<dbReference type="InterPro" id="IPR029063">
    <property type="entry name" value="SAM-dependent_MTases_sf"/>
</dbReference>
<dbReference type="PANTHER" id="PTHR13600">
    <property type="entry name" value="LEUCINE CARBOXYL METHYLTRANSFERASE"/>
    <property type="match status" value="1"/>
</dbReference>
<dbReference type="PANTHER" id="PTHR13600:SF33">
    <property type="entry name" value="LEUCINE CARBOXYL METHYLTRANSFERASE 1"/>
    <property type="match status" value="1"/>
</dbReference>
<dbReference type="Pfam" id="PF04072">
    <property type="entry name" value="LCM"/>
    <property type="match status" value="1"/>
</dbReference>
<dbReference type="PIRSF" id="PIRSF016305">
    <property type="entry name" value="LCM_mtfrase"/>
    <property type="match status" value="1"/>
</dbReference>
<dbReference type="SUPFAM" id="SSF53335">
    <property type="entry name" value="S-adenosyl-L-methionine-dependent methyltransferases"/>
    <property type="match status" value="1"/>
</dbReference>
<gene>
    <name evidence="3" type="primary">lcmt-1</name>
    <name evidence="3" type="ORF">B0285.4</name>
</gene>
<feature type="chain" id="PRO_0000065058" description="Leucine carboxyl methyltransferase 1">
    <location>
        <begin position="1"/>
        <end position="333"/>
    </location>
</feature>
<feature type="binding site" evidence="1">
    <location>
        <position position="42"/>
    </location>
    <ligand>
        <name>S-adenosyl-L-methionine</name>
        <dbReference type="ChEBI" id="CHEBI:59789"/>
    </ligand>
</feature>
<feature type="binding site" evidence="1">
    <location>
        <position position="82"/>
    </location>
    <ligand>
        <name>S-adenosyl-L-methionine</name>
        <dbReference type="ChEBI" id="CHEBI:59789"/>
    </ligand>
</feature>
<feature type="binding site" evidence="1">
    <location>
        <position position="107"/>
    </location>
    <ligand>
        <name>S-adenosyl-L-methionine</name>
        <dbReference type="ChEBI" id="CHEBI:59789"/>
    </ligand>
</feature>
<feature type="binding site" evidence="1">
    <location>
        <position position="131"/>
    </location>
    <ligand>
        <name>S-adenosyl-L-methionine</name>
        <dbReference type="ChEBI" id="CHEBI:59789"/>
    </ligand>
</feature>
<feature type="binding site" evidence="1">
    <location>
        <begin position="181"/>
        <end position="182"/>
    </location>
    <ligand>
        <name>S-adenosyl-L-methionine</name>
        <dbReference type="ChEBI" id="CHEBI:59789"/>
    </ligand>
</feature>
<feature type="binding site" evidence="1">
    <location>
        <position position="208"/>
    </location>
    <ligand>
        <name>S-adenosyl-L-methionine</name>
        <dbReference type="ChEBI" id="CHEBI:59789"/>
    </ligand>
</feature>
<evidence type="ECO:0000250" key="1">
    <source>
        <dbReference type="UniProtKB" id="Q9UIC8"/>
    </source>
</evidence>
<evidence type="ECO:0000305" key="2"/>
<evidence type="ECO:0000312" key="3">
    <source>
        <dbReference type="WormBase" id="B0285.4"/>
    </source>
</evidence>
<reference key="1">
    <citation type="journal article" date="1998" name="Science">
        <title>Genome sequence of the nematode C. elegans: a platform for investigating biology.</title>
        <authorList>
            <consortium name="The C. elegans sequencing consortium"/>
        </authorList>
    </citation>
    <scope>NUCLEOTIDE SEQUENCE [LARGE SCALE GENOMIC DNA]</scope>
    <source>
        <strain>Bristol N2</strain>
    </source>
</reference>